<organismHost>
    <name type="scientific">Homo sapiens</name>
    <name type="common">Human</name>
    <dbReference type="NCBI Taxonomy" id="9606"/>
</organismHost>
<keyword id="KW-0007">Acetylation</keyword>
<keyword id="KW-0010">Activator</keyword>
<keyword id="KW-0014">AIDS</keyword>
<keyword id="KW-0025">Alternative splicing</keyword>
<keyword id="KW-0053">Apoptosis</keyword>
<keyword id="KW-1035">Host cytoplasm</keyword>
<keyword id="KW-1048">Host nucleus</keyword>
<keyword id="KW-0945">Host-virus interaction</keyword>
<keyword id="KW-1090">Inhibition of host innate immune response by virus</keyword>
<keyword id="KW-1114">Inhibition of host interferon signaling pathway by virus</keyword>
<keyword id="KW-0922">Interferon antiviral system evasion</keyword>
<keyword id="KW-1017">Isopeptide bond</keyword>
<keyword id="KW-0479">Metal-binding</keyword>
<keyword id="KW-0488">Methylation</keyword>
<keyword id="KW-1122">Modulation of host chromatin by virus</keyword>
<keyword id="KW-1126">Modulation of host PP1 activity by virus</keyword>
<keyword id="KW-0597">Phosphoprotein</keyword>
<keyword id="KW-1185">Reference proteome</keyword>
<keyword id="KW-0694">RNA-binding</keyword>
<keyword id="KW-0964">Secreted</keyword>
<keyword id="KW-0804">Transcription</keyword>
<keyword id="KW-0805">Transcription regulation</keyword>
<keyword id="KW-0832">Ubl conjugation</keyword>
<keyword id="KW-0899">Viral immunoevasion</keyword>
<keyword id="KW-0862">Zinc</keyword>
<gene>
    <name evidence="1" type="primary">tat</name>
</gene>
<accession>P04611</accession>
<proteinExistence type="inferred from homology"/>
<organism>
    <name type="scientific">Human immunodeficiency virus type 1 group M subtype D (isolate ELI)</name>
    <name type="common">HIV-1</name>
    <dbReference type="NCBI Taxonomy" id="11689"/>
    <lineage>
        <taxon>Viruses</taxon>
        <taxon>Riboviria</taxon>
        <taxon>Pararnavirae</taxon>
        <taxon>Artverviricota</taxon>
        <taxon>Revtraviricetes</taxon>
        <taxon>Ortervirales</taxon>
        <taxon>Retroviridae</taxon>
        <taxon>Orthoretrovirinae</taxon>
        <taxon>Lentivirus</taxon>
        <taxon>Human immunodeficiency virus type 1</taxon>
    </lineage>
</organism>
<reference key="1">
    <citation type="journal article" date="1986" name="Cell">
        <title>Genetic variability of the AIDS virus: nucleotide sequence analysis of two isolates from African patients.</title>
        <authorList>
            <person name="Alizon M."/>
            <person name="Wain-Hobson S."/>
            <person name="Montagnier L."/>
            <person name="Sonigo P."/>
        </authorList>
    </citation>
    <scope>NUCLEOTIDE SEQUENCE [GENOMIC DNA]</scope>
</reference>
<reference key="2">
    <citation type="journal article" date="2005" name="Microbes Infect.">
        <title>Decoding Tat: the biology of HIV Tat posttranslational modifications.</title>
        <authorList>
            <person name="Hetzer C."/>
            <person name="Dormeyer W."/>
            <person name="Schnolzer M."/>
            <person name="Ott M."/>
        </authorList>
    </citation>
    <scope>REVIEW</scope>
    <scope>ALTERNATIVE SPLICING</scope>
</reference>
<reference key="3">
    <citation type="journal article" date="2006" name="Front. Biosci.">
        <title>The multiple functions of HIV-1 Tat: proliferation versus apoptosis.</title>
        <authorList>
            <person name="Peruzzi F."/>
        </authorList>
    </citation>
    <scope>REVIEW</scope>
</reference>
<reference key="4">
    <citation type="journal article" date="2006" name="Microbes Infect.">
        <title>HIV tat and neurotoxicity.</title>
        <authorList>
            <person name="King J.E."/>
            <person name="Eugenin E.A."/>
            <person name="Buckner C.M."/>
            <person name="Berman J.W."/>
        </authorList>
    </citation>
    <scope>REVIEW</scope>
</reference>
<name>TAT_HV1EL</name>
<feature type="chain" id="PRO_0000085349" description="Protein Tat">
    <location>
        <begin position="1"/>
        <end position="99"/>
    </location>
</feature>
<feature type="region of interest" description="Transactivation" evidence="1">
    <location>
        <begin position="1"/>
        <end position="48"/>
    </location>
</feature>
<feature type="region of interest" description="Interaction with human CREBBP" evidence="1">
    <location>
        <begin position="1"/>
        <end position="24"/>
    </location>
</feature>
<feature type="region of interest" description="Disordered" evidence="2">
    <location>
        <begin position="1"/>
        <end position="22"/>
    </location>
</feature>
<feature type="region of interest" description="Cysteine-rich" evidence="1">
    <location>
        <begin position="22"/>
        <end position="37"/>
    </location>
</feature>
<feature type="region of interest" description="Core" evidence="1">
    <location>
        <begin position="38"/>
        <end position="48"/>
    </location>
</feature>
<feature type="region of interest" description="Disordered" evidence="2">
    <location>
        <begin position="48"/>
        <end position="99"/>
    </location>
</feature>
<feature type="region of interest" description="Interaction with the host capping enzyme RNGTT" evidence="1">
    <location>
        <begin position="49"/>
        <end position="86"/>
    </location>
</feature>
<feature type="short sequence motif" description="Nuclear localization signal, RNA-binding (TAR), and protein transduction" evidence="1">
    <location>
        <begin position="49"/>
        <end position="57"/>
    </location>
</feature>
<feature type="short sequence motif" description="Cell attachment site" evidence="1">
    <location>
        <begin position="78"/>
        <end position="80"/>
    </location>
</feature>
<feature type="compositionally biased region" description="Basic and acidic residues" evidence="2">
    <location>
        <begin position="83"/>
        <end position="93"/>
    </location>
</feature>
<feature type="binding site" evidence="1">
    <location>
        <position position="22"/>
    </location>
    <ligand>
        <name>Zn(2+)</name>
        <dbReference type="ChEBI" id="CHEBI:29105"/>
        <label>1</label>
    </ligand>
</feature>
<feature type="binding site" evidence="1">
    <location>
        <position position="25"/>
    </location>
    <ligand>
        <name>Zn(2+)</name>
        <dbReference type="ChEBI" id="CHEBI:29105"/>
        <label>2</label>
    </ligand>
</feature>
<feature type="binding site" evidence="1">
    <location>
        <position position="27"/>
    </location>
    <ligand>
        <name>Zn(2+)</name>
        <dbReference type="ChEBI" id="CHEBI:29105"/>
        <label>2</label>
    </ligand>
</feature>
<feature type="binding site" evidence="1">
    <location>
        <position position="30"/>
    </location>
    <ligand>
        <name>Zn(2+)</name>
        <dbReference type="ChEBI" id="CHEBI:29105"/>
        <label>2</label>
    </ligand>
</feature>
<feature type="binding site" evidence="1">
    <location>
        <position position="33"/>
    </location>
    <ligand>
        <name>Zn(2+)</name>
        <dbReference type="ChEBI" id="CHEBI:29105"/>
        <label>1</label>
    </ligand>
</feature>
<feature type="binding site" evidence="1">
    <location>
        <position position="34"/>
    </location>
    <ligand>
        <name>Zn(2+)</name>
        <dbReference type="ChEBI" id="CHEBI:29105"/>
        <label>1</label>
    </ligand>
</feature>
<feature type="binding site" evidence="1">
    <location>
        <position position="37"/>
    </location>
    <ligand>
        <name>Zn(2+)</name>
        <dbReference type="ChEBI" id="CHEBI:29105"/>
        <label>1</label>
    </ligand>
</feature>
<feature type="site" description="Essential for Tat translocation through the endosomal membrane" evidence="1">
    <location>
        <position position="11"/>
    </location>
</feature>
<feature type="modified residue" description="N6-acetyllysine; by host PCAF" evidence="1">
    <location>
        <position position="28"/>
    </location>
</feature>
<feature type="modified residue" description="N6-acetyllysine; by host EP300 and GCN5L2" evidence="1">
    <location>
        <position position="50"/>
    </location>
</feature>
<feature type="modified residue" description="N6-acetyllysine; by host EP300 and GCN5L2" evidence="1">
    <location>
        <position position="51"/>
    </location>
</feature>
<feature type="modified residue" description="Asymmetric dimethylarginine; by host PRMT6" evidence="1">
    <location>
        <position position="52"/>
    </location>
</feature>
<feature type="modified residue" description="Asymmetric dimethylarginine; by host PRMT6" evidence="1">
    <location>
        <position position="53"/>
    </location>
</feature>
<feature type="cross-link" description="Glycyl lysine isopeptide (Lys-Gly) (interchain with G-Cter in ubiquitin)" evidence="1">
    <location>
        <position position="71"/>
    </location>
</feature>
<feature type="splice variant" id="VSP_022410" description="In isoform Short.">
    <location>
        <begin position="73"/>
        <end position="99"/>
    </location>
</feature>
<dbReference type="EMBL" id="K03454">
    <property type="protein sequence ID" value="AAA44322.1"/>
    <property type="molecule type" value="Genomic_DNA"/>
</dbReference>
<dbReference type="SMR" id="P04611"/>
<dbReference type="Proteomes" id="UP000007693">
    <property type="component" value="Segment"/>
</dbReference>
<dbReference type="GO" id="GO:0005576">
    <property type="term" value="C:extracellular region"/>
    <property type="evidence" value="ECO:0007669"/>
    <property type="project" value="UniProtKB-SubCell"/>
</dbReference>
<dbReference type="GO" id="GO:0030430">
    <property type="term" value="C:host cell cytoplasm"/>
    <property type="evidence" value="ECO:0007669"/>
    <property type="project" value="UniProtKB-SubCell"/>
</dbReference>
<dbReference type="GO" id="GO:0044196">
    <property type="term" value="C:host cell nucleolus"/>
    <property type="evidence" value="ECO:0007669"/>
    <property type="project" value="UniProtKB-SubCell"/>
</dbReference>
<dbReference type="GO" id="GO:0042805">
    <property type="term" value="F:actinin binding"/>
    <property type="evidence" value="ECO:0007669"/>
    <property type="project" value="UniProtKB-UniRule"/>
</dbReference>
<dbReference type="GO" id="GO:0030332">
    <property type="term" value="F:cyclin binding"/>
    <property type="evidence" value="ECO:0007669"/>
    <property type="project" value="UniProtKB-UniRule"/>
</dbReference>
<dbReference type="GO" id="GO:0046872">
    <property type="term" value="F:metal ion binding"/>
    <property type="evidence" value="ECO:0007669"/>
    <property type="project" value="UniProtKB-UniRule"/>
</dbReference>
<dbReference type="GO" id="GO:0019904">
    <property type="term" value="F:protein domain specific binding"/>
    <property type="evidence" value="ECO:0007669"/>
    <property type="project" value="UniProtKB-UniRule"/>
</dbReference>
<dbReference type="GO" id="GO:0004865">
    <property type="term" value="F:protein serine/threonine phosphatase inhibitor activity"/>
    <property type="evidence" value="ECO:0007669"/>
    <property type="project" value="UniProtKB-KW"/>
</dbReference>
<dbReference type="GO" id="GO:0001069">
    <property type="term" value="F:regulatory region RNA binding"/>
    <property type="evidence" value="ECO:0000353"/>
    <property type="project" value="DisProt"/>
</dbReference>
<dbReference type="GO" id="GO:0001070">
    <property type="term" value="F:RNA-binding transcription regulator activity"/>
    <property type="evidence" value="ECO:0007669"/>
    <property type="project" value="UniProtKB-UniRule"/>
</dbReference>
<dbReference type="GO" id="GO:1990970">
    <property type="term" value="F:trans-activation response element binding"/>
    <property type="evidence" value="ECO:0007669"/>
    <property type="project" value="UniProtKB-UniRule"/>
</dbReference>
<dbReference type="GO" id="GO:0006351">
    <property type="term" value="P:DNA-templated transcription"/>
    <property type="evidence" value="ECO:0007669"/>
    <property type="project" value="UniProtKB-UniRule"/>
</dbReference>
<dbReference type="GO" id="GO:0032968">
    <property type="term" value="P:positive regulation of transcription elongation by RNA polymerase II"/>
    <property type="evidence" value="ECO:0007669"/>
    <property type="project" value="UniProtKB-UniRule"/>
</dbReference>
<dbReference type="GO" id="GO:0050434">
    <property type="term" value="P:positive regulation of viral transcription"/>
    <property type="evidence" value="ECO:0007669"/>
    <property type="project" value="UniProtKB-UniRule"/>
</dbReference>
<dbReference type="GO" id="GO:0039525">
    <property type="term" value="P:symbiont-mediated perturbation of host chromatin organization"/>
    <property type="evidence" value="ECO:0007669"/>
    <property type="project" value="UniProtKB-UniRule"/>
</dbReference>
<dbReference type="GO" id="GO:0052170">
    <property type="term" value="P:symbiont-mediated suppression of host innate immune response"/>
    <property type="evidence" value="ECO:0007669"/>
    <property type="project" value="UniProtKB-KW"/>
</dbReference>
<dbReference type="GO" id="GO:0039606">
    <property type="term" value="P:symbiont-mediated suppression of host translation initiation"/>
    <property type="evidence" value="ECO:0007669"/>
    <property type="project" value="UniProtKB-KW"/>
</dbReference>
<dbReference type="GO" id="GO:0039502">
    <property type="term" value="P:symbiont-mediated suppression of host type I interferon-mediated signaling pathway"/>
    <property type="evidence" value="ECO:0007669"/>
    <property type="project" value="UniProtKB-UniRule"/>
</dbReference>
<dbReference type="GO" id="GO:0019080">
    <property type="term" value="P:viral gene expression"/>
    <property type="evidence" value="ECO:0000270"/>
    <property type="project" value="DisProt"/>
</dbReference>
<dbReference type="Gene3D" id="4.10.20.10">
    <property type="entry name" value="Tat domain"/>
    <property type="match status" value="1"/>
</dbReference>
<dbReference type="HAMAP" id="MF_04079">
    <property type="entry name" value="HIV_TAT"/>
    <property type="match status" value="1"/>
</dbReference>
<dbReference type="InterPro" id="IPR001831">
    <property type="entry name" value="IV_Tat"/>
</dbReference>
<dbReference type="InterPro" id="IPR036963">
    <property type="entry name" value="Tat_dom_sf"/>
</dbReference>
<dbReference type="Pfam" id="PF00539">
    <property type="entry name" value="Tat"/>
    <property type="match status" value="1"/>
</dbReference>
<dbReference type="PRINTS" id="PR00055">
    <property type="entry name" value="HIVTATDOMAIN"/>
</dbReference>
<protein>
    <recommendedName>
        <fullName evidence="1">Protein Tat</fullName>
    </recommendedName>
    <alternativeName>
        <fullName evidence="1">Transactivating regulatory protein</fullName>
    </alternativeName>
</protein>
<sequence>MDPVDPNLEPWNHPGSQPRTPCNKCHCKKCCYHCPVCFLNKGLGISYGRKKRRQRRGPPQGGQAHQVPIPKQPSSQPRGDPTGPKEQKKKVESEAETDP</sequence>
<comment type="function">
    <text evidence="1">Transcriptional activator that increases RNA Pol II processivity, thereby increasing the level of full-length viral transcripts. Recognizes a hairpin structure at the 5'-LTR of the nascent viral mRNAs referred to as the transactivation responsive RNA element (TAR) and recruits the cyclin T1-CDK9 complex (P-TEFb complex) that will in turn hyperphosphorylate the RNA polymerase II to allow efficient elongation. The CDK9 component of P-TEFb and other Tat-activated kinases hyperphosphorylate the C-terminus of RNA Pol II that becomes stabilized and much more processive. Other factors such as HTATSF1/Tat-SF1, SUPT5H/SPT5, and HTATIP2 are also important for Tat's function. Besides its effect on RNA Pol II processivity, Tat induces chromatin remodeling of proviral genes by recruiting the histone acetyltransferases (HATs) CREBBP, EP300 and PCAF to the chromatin. This also contributes to the increase in proviral transcription rate, especially when the provirus integrates in transcriptionally silent region of the host genome. To ensure maximal activation of the LTR, Tat mediates nuclear translocation of NF-kappa-B by interacting with host RELA. Through its interaction with host TBP, Tat may also modulate transcription initiation. Tat can reactivate a latently infected cell by penetrating in it and transactivating its LTR promoter. In the cytoplasm, Tat is thought to act as a translational activator of HIV-1 mRNAs.</text>
</comment>
<comment type="function">
    <text evidence="1">Extracellular circulating Tat can be endocytosed by surrounding uninfected cells via the binding to several surface receptors such as CD26, CXCR4, heparan sulfate proteoglycans (HSPG) or LDLR. Neurons are rarely infected, but they internalize Tat via their LDLR. Through its interaction with nuclear HATs, Tat is potentially able to control the acetylation-dependent cellular gene expression. Modulates the expression of many cellular genes involved in cell survival, proliferation or in coding for cytokines or cytokine receptors. Tat plays a role in T-cell and neurons apoptosis. Tat induced neurotoxicity and apoptosis probably contribute to neuroAIDS. Circulating Tat also acts as a chemokine-like and/or growth factor-like molecule that binds to specific receptors on the surface of the cells, affecting many cellular pathways. In the vascular system, Tat binds to ITGAV/ITGB3 and ITGA5/ITGB1 integrins dimers at the surface of endothelial cells and competes with bFGF for heparin-binding sites, leading to an excess of soluble bFGF.</text>
</comment>
<comment type="subunit">
    <text evidence="1">Interacts with host CCNT1. Associates with the P-TEFb complex composed at least of Tat, P-TEFb (CDK9 and CCNT1), TAR RNA, RNA Pol II. Recruits the HATs CREBBP, TAF1/TFIID, EP300, PCAF and GCN5L2. Interacts with host KAT5/Tip60; this interaction targets the latter to degradation. Interacts with the host deacetylase SIRT1. Interacts with host capping enzyme RNGTT; this interaction stimulates RNGTT. Binds to host KDR, and to the host integrins ITGAV/ITGB3 and ITGA5/ITGB1. Interacts with host KPNB1/importin beta-1 without previous binding to KPNA1/importin alpha-1. Interacts with EIF2AK2. Interacts with host nucleosome assembly protein NAP1L1; this interaction may be required for the transport of Tat within the nucleus, since the two proteins interact at the nuclear rim. Interacts with host C1QBP/SF2P32; this interaction involves lysine-acetylated Tat. Interacts with the host chemokine receptors CCR2, CCR3 and CXCR4. Interacts with host DPP4/CD26; this interaction may trigger an anti-proliferative effect. Interacts with host LDLR. Interacts with the host extracellular matrix metalloproteinase MMP1. Interacts with host PRMT6; this interaction mediates Tat's methylation. Interacts with, and is ubiquitinated by MDM2/Hdm2. Interacts with host PSMC3 and HTATIP2. Interacts with STAB1; this interaction may overcome SATB1-mediated repression of IL2 and IL2RA (interleukin) in T cells by binding to the same domain than HDAC1. Interacts (when acetylated) with human CDK13, thereby increasing HIV-1 mRNA splicing and promoting the production of the doubly spliced HIV-1 protein Nef. Interacts with host TBP; this interaction modulates the activity of transcriptional pre-initiation complex. Interacts with host RELA. Interacts with host PLSCR1; this interaction negatively regulates Tat transactivation activity by altering its subcellular distribution.</text>
</comment>
<comment type="subcellular location">
    <subcellularLocation>
        <location evidence="1">Host nucleus</location>
        <location evidence="1">Host nucleolus</location>
    </subcellularLocation>
    <subcellularLocation>
        <location evidence="1">Host cytoplasm</location>
    </subcellularLocation>
    <subcellularLocation>
        <location evidence="1">Secreted</location>
    </subcellularLocation>
    <text evidence="1">Probably localizes to both nuclear and nucleolar compartments. Nuclear localization is mediated through the interaction of the nuclear localization signal with importin KPNB1. Secretion occurs through a Golgi-independent pathway. Tat is released from infected cells to the extracellular space where it remains associated to the cell membrane, or is secreted into the cerebrospinal fluid and sera. Extracellular Tat can be endocytosed by surrounding uninfected cells via binding to several receptors depending on the cell type.</text>
</comment>
<comment type="alternative products">
    <event type="alternative splicing"/>
    <isoform>
        <id>P04611-1</id>
        <name>Long</name>
        <sequence type="displayed"/>
    </isoform>
    <isoform>
        <id>P04611-2</id>
        <name>Short</name>
        <sequence type="described" ref="VSP_022410"/>
    </isoform>
</comment>
<comment type="domain">
    <text evidence="1">The cell attachment site mediates the interaction with ITGAV/ITGB3 and ITGA5/ITGB1 integrins, leading to vascular cell migration and invasion. This interaction also provides endothelial cells with the adhesion signal they require to grow in response to mitogens.</text>
</comment>
<comment type="domain">
    <text evidence="1">The Cys-rich region may bind 2 zinc ions. This region is involved in binding to KAT5.</text>
</comment>
<comment type="domain">
    <text evidence="1">The transactivation domain mediates the interaction with CCNT1, GCN5L2, and MDM2.</text>
</comment>
<comment type="domain">
    <text evidence="1">The Arg-rich RNA-binding region binds the TAR RNA. This region also mediates the nuclear localization through direct binding to KPNB1 and is involved in Tat's transfer across cell membranes (protein transduction). The same region is required for the interaction with EP300, PCAF, EIF2AK2 and KDR.</text>
</comment>
<comment type="PTM">
    <text evidence="1">Asymmetrical arginine methylation by host PRMT6 seems to diminish the transactivation capacity of Tat and affects the interaction with host CCNT1.</text>
</comment>
<comment type="PTM">
    <text evidence="1">Acetylation by EP300, CREBBP, GCN5L2/GCN5 and PCAF regulates the transactivation activity of Tat. EP300-mediated acetylation of Lys-50 promotes dissociation of Tat from the TAR RNA through the competitive binding to PCAF's bromodomain. In addition, the non-acetylated Tat's N-terminus can also interact with PCAF. PCAF-mediated acetylation of Lys-28 enhances Tat's binding to CCNT1. Lys-50 is deacetylated by SIRT1.</text>
</comment>
<comment type="PTM">
    <text evidence="1">Polyubiquitination by host MDM2 does not target Tat to degradation, but activates its transactivation function and fosters interaction with CCNT1 and TAR RNA.</text>
</comment>
<comment type="PTM">
    <text evidence="1">Phosphorylated by EIF2AK2 on serine and threonine residues adjacent to the basic region important for TAR RNA binding and function. Phosphorylation of Tat by EIF2AK2 is dependent on the prior activation of EIF2AK2 by dsRNA.</text>
</comment>
<comment type="miscellaneous">
    <text evidence="1">HIV-1 lineages are divided in three main groups, M (for Major), O (for Outlier), and N (for New, or Non-M, Non-O). The vast majority of strains found worldwide belong to the group M. Group O seems to be endemic to and largely confined to Cameroon and neighboring countries in West Central Africa, where these viruses represent a small minority of HIV-1 strains. The group N is represented by a limited number of isolates from Cameroonian persons. The group M is further subdivided in 9 clades or subtypes (A to D, F to H, J and K).</text>
</comment>
<comment type="miscellaneous">
    <molecule>Isoform Short</molecule>
    <text evidence="3">Expressed in the late stage of the infection cycle, when unspliced viral RNAs are exported to the cytoplasm by the viral Rev protein.</text>
</comment>
<comment type="similarity">
    <text evidence="1">Belongs to the lentiviruses Tat family.</text>
</comment>
<evidence type="ECO:0000255" key="1">
    <source>
        <dbReference type="HAMAP-Rule" id="MF_04079"/>
    </source>
</evidence>
<evidence type="ECO:0000256" key="2">
    <source>
        <dbReference type="SAM" id="MobiDB-lite"/>
    </source>
</evidence>
<evidence type="ECO:0000305" key="3"/>